<gene>
    <name evidence="1" type="primary">flpA</name>
    <name type="ordered locus">STK_12660</name>
</gene>
<proteinExistence type="inferred from homology"/>
<reference key="1">
    <citation type="journal article" date="2001" name="DNA Res.">
        <title>Complete genome sequence of an aerobic thermoacidophilic Crenarchaeon, Sulfolobus tokodaii strain7.</title>
        <authorList>
            <person name="Kawarabayasi Y."/>
            <person name="Hino Y."/>
            <person name="Horikawa H."/>
            <person name="Jin-no K."/>
            <person name="Takahashi M."/>
            <person name="Sekine M."/>
            <person name="Baba S."/>
            <person name="Ankai A."/>
            <person name="Kosugi H."/>
            <person name="Hosoyama A."/>
            <person name="Fukui S."/>
            <person name="Nagai Y."/>
            <person name="Nishijima K."/>
            <person name="Otsuka R."/>
            <person name="Nakazawa H."/>
            <person name="Takamiya M."/>
            <person name="Kato Y."/>
            <person name="Yoshizawa T."/>
            <person name="Tanaka T."/>
            <person name="Kudoh Y."/>
            <person name="Yamazaki J."/>
            <person name="Kushida N."/>
            <person name="Oguchi A."/>
            <person name="Aoki K."/>
            <person name="Masuda S."/>
            <person name="Yanagii M."/>
            <person name="Nishimura M."/>
            <person name="Yamagishi A."/>
            <person name="Oshima T."/>
            <person name="Kikuchi H."/>
        </authorList>
    </citation>
    <scope>NUCLEOTIDE SEQUENCE [LARGE SCALE GENOMIC DNA]</scope>
    <source>
        <strain>DSM 16993 / JCM 10545 / NBRC 100140 / 7</strain>
    </source>
</reference>
<evidence type="ECO:0000255" key="1">
    <source>
        <dbReference type="HAMAP-Rule" id="MF_00351"/>
    </source>
</evidence>
<feature type="chain" id="PRO_0000148550" description="Fibrillarin-like rRNA/tRNA 2'-O-methyltransferase">
    <location>
        <begin position="1"/>
        <end position="233"/>
    </location>
</feature>
<feature type="binding site" evidence="1">
    <location>
        <begin position="89"/>
        <end position="90"/>
    </location>
    <ligand>
        <name>S-adenosyl-L-methionine</name>
        <dbReference type="ChEBI" id="CHEBI:59789"/>
    </ligand>
</feature>
<feature type="binding site" evidence="1">
    <location>
        <begin position="108"/>
        <end position="109"/>
    </location>
    <ligand>
        <name>S-adenosyl-L-methionine</name>
        <dbReference type="ChEBI" id="CHEBI:59789"/>
    </ligand>
</feature>
<feature type="binding site" evidence="1">
    <location>
        <begin position="133"/>
        <end position="134"/>
    </location>
    <ligand>
        <name>S-adenosyl-L-methionine</name>
        <dbReference type="ChEBI" id="CHEBI:59789"/>
    </ligand>
</feature>
<feature type="binding site" evidence="1">
    <location>
        <begin position="153"/>
        <end position="156"/>
    </location>
    <ligand>
        <name>S-adenosyl-L-methionine</name>
        <dbReference type="ChEBI" id="CHEBI:59789"/>
    </ligand>
</feature>
<accession>Q971W2</accession>
<accession>F9VNZ3</accession>
<sequence>MSELVKISKTQFENVFQCEFNDGTVRLCTKNLAPGFSVYGERLFKVEGVEYREWNAFRSKLGGAILKGLKQNPIVKGTKVLYLGAASGTTPSHVSDIVELEGKVYGVEFSPRVVREFLLVAQHRPNLFPILADARFPQYYRTLVEDVDVLYVDIAQPDETDIAIYNAKFFLKNGGYMMMAIKARSIDVTKEPTEIYEMEVNKLKENNFDVIQVIQLDPYDKDHAMVLAKYKGK</sequence>
<name>FLPA_SULTO</name>
<protein>
    <recommendedName>
        <fullName evidence="1">Fibrillarin-like rRNA/tRNA 2'-O-methyltransferase</fullName>
        <ecNumber evidence="1">2.1.1.-</ecNumber>
    </recommendedName>
</protein>
<comment type="function">
    <text evidence="1">Involved in pre-rRNA and tRNA processing. Utilizes the methyl donor S-adenosyl-L-methionine to catalyze the site-specific 2'-hydroxyl methylation of ribose moieties in rRNA and tRNA. Site specificity is provided by a guide RNA that base pairs with the substrate. Methylation occurs at a characteristic distance from the sequence involved in base pairing with the guide RNA.</text>
</comment>
<comment type="subunit">
    <text evidence="1">Interacts with nop5. Component of box C/D small ribonucleoprotein (sRNP) particles that contain rpl7ae, FlpA and nop5, plus a guide RNA.</text>
</comment>
<comment type="similarity">
    <text evidence="1">Belongs to the methyltransferase superfamily. Fibrillarin family.</text>
</comment>
<keyword id="KW-0489">Methyltransferase</keyword>
<keyword id="KW-1185">Reference proteome</keyword>
<keyword id="KW-0694">RNA-binding</keyword>
<keyword id="KW-0698">rRNA processing</keyword>
<keyword id="KW-0808">Transferase</keyword>
<keyword id="KW-0819">tRNA processing</keyword>
<organism>
    <name type="scientific">Sulfurisphaera tokodaii (strain DSM 16993 / JCM 10545 / NBRC 100140 / 7)</name>
    <name type="common">Sulfolobus tokodaii</name>
    <dbReference type="NCBI Taxonomy" id="273063"/>
    <lineage>
        <taxon>Archaea</taxon>
        <taxon>Thermoproteota</taxon>
        <taxon>Thermoprotei</taxon>
        <taxon>Sulfolobales</taxon>
        <taxon>Sulfolobaceae</taxon>
        <taxon>Sulfurisphaera</taxon>
    </lineage>
</organism>
<dbReference type="EC" id="2.1.1.-" evidence="1"/>
<dbReference type="EMBL" id="BA000023">
    <property type="protein sequence ID" value="BAK54501.1"/>
    <property type="molecule type" value="Genomic_DNA"/>
</dbReference>
<dbReference type="RefSeq" id="WP_052846944.1">
    <property type="nucleotide sequence ID" value="NC_003106.2"/>
</dbReference>
<dbReference type="SMR" id="Q971W2"/>
<dbReference type="STRING" id="273063.STK_12660"/>
<dbReference type="GeneID" id="1459266"/>
<dbReference type="KEGG" id="sto:STK_12660"/>
<dbReference type="PATRIC" id="fig|273063.9.peg.1424"/>
<dbReference type="eggNOG" id="arCOG00078">
    <property type="taxonomic scope" value="Archaea"/>
</dbReference>
<dbReference type="OrthoDB" id="6244at2157"/>
<dbReference type="Proteomes" id="UP000001015">
    <property type="component" value="Chromosome"/>
</dbReference>
<dbReference type="GO" id="GO:1990259">
    <property type="term" value="F:histone H2AQ104 methyltransferase activity"/>
    <property type="evidence" value="ECO:0007669"/>
    <property type="project" value="TreeGrafter"/>
</dbReference>
<dbReference type="GO" id="GO:0003723">
    <property type="term" value="F:RNA binding"/>
    <property type="evidence" value="ECO:0007669"/>
    <property type="project" value="UniProtKB-UniRule"/>
</dbReference>
<dbReference type="GO" id="GO:0008649">
    <property type="term" value="F:rRNA methyltransferase activity"/>
    <property type="evidence" value="ECO:0007669"/>
    <property type="project" value="TreeGrafter"/>
</dbReference>
<dbReference type="GO" id="GO:0000494">
    <property type="term" value="P:box C/D sno(s)RNA 3'-end processing"/>
    <property type="evidence" value="ECO:0007669"/>
    <property type="project" value="TreeGrafter"/>
</dbReference>
<dbReference type="GO" id="GO:0008033">
    <property type="term" value="P:tRNA processing"/>
    <property type="evidence" value="ECO:0007669"/>
    <property type="project" value="UniProtKB-UniRule"/>
</dbReference>
<dbReference type="CDD" id="cd02440">
    <property type="entry name" value="AdoMet_MTases"/>
    <property type="match status" value="1"/>
</dbReference>
<dbReference type="FunFam" id="3.30.200.20:FF:000613">
    <property type="entry name" value="Fibrillarin-like rRNA/tRNA 2'-O-methyltransferase"/>
    <property type="match status" value="1"/>
</dbReference>
<dbReference type="Gene3D" id="3.30.200.20">
    <property type="entry name" value="Phosphorylase Kinase, domain 1"/>
    <property type="match status" value="1"/>
</dbReference>
<dbReference type="Gene3D" id="3.40.50.150">
    <property type="entry name" value="Vaccinia Virus protein VP39"/>
    <property type="match status" value="1"/>
</dbReference>
<dbReference type="HAMAP" id="MF_00351">
    <property type="entry name" value="RNA_methyltransf_FlpA"/>
    <property type="match status" value="1"/>
</dbReference>
<dbReference type="InterPro" id="IPR000692">
    <property type="entry name" value="Fibrillarin"/>
</dbReference>
<dbReference type="InterPro" id="IPR020813">
    <property type="entry name" value="Fibrillarin_CS"/>
</dbReference>
<dbReference type="InterPro" id="IPR029063">
    <property type="entry name" value="SAM-dependent_MTases_sf"/>
</dbReference>
<dbReference type="NCBIfam" id="NF003275">
    <property type="entry name" value="PRK04266.1-1"/>
    <property type="match status" value="1"/>
</dbReference>
<dbReference type="NCBIfam" id="NF003276">
    <property type="entry name" value="PRK04266.1-2"/>
    <property type="match status" value="1"/>
</dbReference>
<dbReference type="NCBIfam" id="NF003277">
    <property type="entry name" value="PRK04266.1-3"/>
    <property type="match status" value="1"/>
</dbReference>
<dbReference type="PANTHER" id="PTHR10335:SF17">
    <property type="entry name" value="FIBRILLARIN"/>
    <property type="match status" value="1"/>
</dbReference>
<dbReference type="PANTHER" id="PTHR10335">
    <property type="entry name" value="RRNA 2-O-METHYLTRANSFERASE FIBRILLARIN"/>
    <property type="match status" value="1"/>
</dbReference>
<dbReference type="Pfam" id="PF01269">
    <property type="entry name" value="Fibrillarin"/>
    <property type="match status" value="1"/>
</dbReference>
<dbReference type="PIRSF" id="PIRSF006540">
    <property type="entry name" value="Nop17p"/>
    <property type="match status" value="1"/>
</dbReference>
<dbReference type="PRINTS" id="PR00052">
    <property type="entry name" value="FIBRILLARIN"/>
</dbReference>
<dbReference type="SMART" id="SM01206">
    <property type="entry name" value="Fibrillarin"/>
    <property type="match status" value="1"/>
</dbReference>
<dbReference type="SUPFAM" id="SSF53335">
    <property type="entry name" value="S-adenosyl-L-methionine-dependent methyltransferases"/>
    <property type="match status" value="1"/>
</dbReference>
<dbReference type="PROSITE" id="PS00566">
    <property type="entry name" value="FIBRILLARIN"/>
    <property type="match status" value="1"/>
</dbReference>